<reference key="1">
    <citation type="journal article" date="2005" name="Nucleic Acids Res.">
        <title>Genome dynamics and diversity of Shigella species, the etiologic agents of bacillary dysentery.</title>
        <authorList>
            <person name="Yang F."/>
            <person name="Yang J."/>
            <person name="Zhang X."/>
            <person name="Chen L."/>
            <person name="Jiang Y."/>
            <person name="Yan Y."/>
            <person name="Tang X."/>
            <person name="Wang J."/>
            <person name="Xiong Z."/>
            <person name="Dong J."/>
            <person name="Xue Y."/>
            <person name="Zhu Y."/>
            <person name="Xu X."/>
            <person name="Sun L."/>
            <person name="Chen S."/>
            <person name="Nie H."/>
            <person name="Peng J."/>
            <person name="Xu J."/>
            <person name="Wang Y."/>
            <person name="Yuan Z."/>
            <person name="Wen Y."/>
            <person name="Yao Z."/>
            <person name="Shen Y."/>
            <person name="Qiang B."/>
            <person name="Hou Y."/>
            <person name="Yu J."/>
            <person name="Jin Q."/>
        </authorList>
    </citation>
    <scope>NUCLEOTIDE SEQUENCE [LARGE SCALE GENOMIC DNA]</scope>
    <source>
        <strain>Sb227</strain>
    </source>
</reference>
<dbReference type="EC" id="3.2.2.-"/>
<dbReference type="EMBL" id="CP000036">
    <property type="protein sequence ID" value="ABB65362.1"/>
    <property type="molecule type" value="Genomic_DNA"/>
</dbReference>
<dbReference type="RefSeq" id="WP_001145132.1">
    <property type="nucleotide sequence ID" value="NC_007613.1"/>
</dbReference>
<dbReference type="BMRB" id="Q323Z6"/>
<dbReference type="SMR" id="Q323Z6"/>
<dbReference type="KEGG" id="sbo:SBO_0686"/>
<dbReference type="HOGENOM" id="CLU_084247_3_1_6"/>
<dbReference type="Proteomes" id="UP000007067">
    <property type="component" value="Chromosome"/>
</dbReference>
<dbReference type="GO" id="GO:0016798">
    <property type="term" value="F:hydrolase activity, acting on glycosyl bonds"/>
    <property type="evidence" value="ECO:0007669"/>
    <property type="project" value="UniProtKB-KW"/>
</dbReference>
<dbReference type="CDD" id="cd15457">
    <property type="entry name" value="NADAR"/>
    <property type="match status" value="1"/>
</dbReference>
<dbReference type="FunFam" id="1.10.357.40:FF:000001">
    <property type="entry name" value="Swarming motility protein ybiA"/>
    <property type="match status" value="1"/>
</dbReference>
<dbReference type="Gene3D" id="1.10.357.40">
    <property type="entry name" value="YbiA-like"/>
    <property type="match status" value="1"/>
</dbReference>
<dbReference type="InterPro" id="IPR012816">
    <property type="entry name" value="NADAR"/>
</dbReference>
<dbReference type="InterPro" id="IPR037238">
    <property type="entry name" value="YbiA-like_sf"/>
</dbReference>
<dbReference type="NCBIfam" id="TIGR02464">
    <property type="entry name" value="ribofla_fusion"/>
    <property type="match status" value="1"/>
</dbReference>
<dbReference type="Pfam" id="PF08719">
    <property type="entry name" value="NADAR"/>
    <property type="match status" value="1"/>
</dbReference>
<dbReference type="SUPFAM" id="SSF143990">
    <property type="entry name" value="YbiA-like"/>
    <property type="match status" value="1"/>
</dbReference>
<keyword id="KW-0326">Glycosidase</keyword>
<keyword id="KW-0378">Hydrolase</keyword>
<organism>
    <name type="scientific">Shigella boydii serotype 4 (strain Sb227)</name>
    <dbReference type="NCBI Taxonomy" id="300268"/>
    <lineage>
        <taxon>Bacteria</taxon>
        <taxon>Pseudomonadati</taxon>
        <taxon>Pseudomonadota</taxon>
        <taxon>Gammaproteobacteria</taxon>
        <taxon>Enterobacterales</taxon>
        <taxon>Enterobacteriaceae</taxon>
        <taxon>Shigella</taxon>
    </lineage>
</organism>
<sequence>MPVRAQRIQHVMQDTIINFYSTSDDYGDFSNFAAWPIKVDGKTWPTSEHYFQAQKFLDEKYREEIRRVSSPMVAARMGRNRSKPLRKNWESVKEQVMRKALRAKFEQHAELRALLLATAPAKLVEHTENDAYWGDGGNGKGKNRLGYLLMELREQLAIEK</sequence>
<feature type="chain" id="PRO_0000287338" description="N-glycosidase YbiA">
    <location>
        <begin position="1"/>
        <end position="160"/>
    </location>
</feature>
<comment type="function">
    <text evidence="1">Catalyzes the hydrolysis of the N-glycosidic bond in the first two intermediates of riboflavin biosynthesis, which are highly reactive metabolites, yielding relatively innocuous products. Thus, can divert a surplus of harmful intermediates into relatively harmless products and pre-empt the damage these intermediates would otherwise do. Helps maintain flavin levels. May act on other substrates in vivo. Has no activity against GTP, nucleoside monophosphates or ADP-ribose. Is Required for swarming motility.</text>
</comment>
<comment type="catalytic activity">
    <reaction evidence="1">
        <text>2,5-diamino-6-hydroxy-4-(5-phosphoribosylamino)-pyrimidine + H2O = 2,5,6-triamino-4-hydroxypyrimidine + D-ribose 5-phosphate</text>
        <dbReference type="Rhea" id="RHEA:23436"/>
        <dbReference type="ChEBI" id="CHEBI:15377"/>
        <dbReference type="ChEBI" id="CHEBI:58614"/>
        <dbReference type="ChEBI" id="CHEBI:78346"/>
        <dbReference type="ChEBI" id="CHEBI:137796"/>
    </reaction>
</comment>
<comment type="catalytic activity">
    <reaction evidence="1">
        <text>5-amino-6-(5-phospho-D-ribosylamino)uracil + H2O = 5,6-diaminouracil + D-ribose 5-phosphate</text>
        <dbReference type="Rhea" id="RHEA:55020"/>
        <dbReference type="ChEBI" id="CHEBI:15377"/>
        <dbReference type="ChEBI" id="CHEBI:46252"/>
        <dbReference type="ChEBI" id="CHEBI:58453"/>
        <dbReference type="ChEBI" id="CHEBI:78346"/>
    </reaction>
</comment>
<comment type="similarity">
    <text evidence="2">Belongs to the YbiA family.</text>
</comment>
<gene>
    <name type="primary">ybiA</name>
    <name type="ordered locus">SBO_0686</name>
</gene>
<name>RIBX_SHIBS</name>
<proteinExistence type="inferred from homology"/>
<evidence type="ECO:0000250" key="1">
    <source>
        <dbReference type="UniProtKB" id="P30176"/>
    </source>
</evidence>
<evidence type="ECO:0000305" key="2"/>
<protein>
    <recommendedName>
        <fullName>N-glycosidase YbiA</fullName>
        <ecNumber>3.2.2.-</ecNumber>
    </recommendedName>
    <alternativeName>
        <fullName>Riboflavin biosynthesis intermediates N-glycosidase</fullName>
    </alternativeName>
</protein>
<accession>Q323Z6</accession>